<evidence type="ECO:0000255" key="1">
    <source>
        <dbReference type="HAMAP-Rule" id="MF_00625"/>
    </source>
</evidence>
<feature type="chain" id="PRO_1000130523" description="Selenide, water dikinase">
    <location>
        <begin position="1"/>
        <end position="343"/>
    </location>
</feature>
<feature type="active site" evidence="1">
    <location>
        <position position="15"/>
    </location>
</feature>
<feature type="binding site" description="in other chain" evidence="1">
    <location>
        <position position="18"/>
    </location>
    <ligand>
        <name>ATP</name>
        <dbReference type="ChEBI" id="CHEBI:30616"/>
        <note>ligand shared between dimeric partners</note>
    </ligand>
</feature>
<feature type="binding site" description="in other chain" evidence="1">
    <location>
        <begin position="46"/>
        <end position="48"/>
    </location>
    <ligand>
        <name>ATP</name>
        <dbReference type="ChEBI" id="CHEBI:30616"/>
        <note>ligand shared between dimeric partners</note>
    </ligand>
</feature>
<feature type="binding site" evidence="1">
    <location>
        <position position="49"/>
    </location>
    <ligand>
        <name>Mg(2+)</name>
        <dbReference type="ChEBI" id="CHEBI:18420"/>
    </ligand>
</feature>
<feature type="binding site" description="in other chain" evidence="1">
    <location>
        <position position="66"/>
    </location>
    <ligand>
        <name>ATP</name>
        <dbReference type="ChEBI" id="CHEBI:30616"/>
        <note>ligand shared between dimeric partners</note>
    </ligand>
</feature>
<feature type="binding site" description="in other chain" evidence="1">
    <location>
        <position position="89"/>
    </location>
    <ligand>
        <name>ATP</name>
        <dbReference type="ChEBI" id="CHEBI:30616"/>
        <note>ligand shared between dimeric partners</note>
    </ligand>
</feature>
<feature type="binding site" evidence="1">
    <location>
        <position position="89"/>
    </location>
    <ligand>
        <name>Mg(2+)</name>
        <dbReference type="ChEBI" id="CHEBI:18420"/>
    </ligand>
</feature>
<feature type="binding site" evidence="1">
    <location>
        <begin position="137"/>
        <end position="139"/>
    </location>
    <ligand>
        <name>ATP</name>
        <dbReference type="ChEBI" id="CHEBI:30616"/>
        <note>ligand shared between dimeric partners</note>
    </ligand>
</feature>
<feature type="binding site" evidence="1">
    <location>
        <position position="225"/>
    </location>
    <ligand>
        <name>Mg(2+)</name>
        <dbReference type="ChEBI" id="CHEBI:18420"/>
    </ligand>
</feature>
<feature type="site" description="Important for catalytic activity" evidence="1">
    <location>
        <position position="18"/>
    </location>
</feature>
<name>SELD_SULNB</name>
<gene>
    <name evidence="1" type="primary">selD</name>
    <name type="ordered locus">SUN_1829</name>
</gene>
<comment type="function">
    <text evidence="1">Synthesizes selenophosphate from selenide and ATP.</text>
</comment>
<comment type="catalytic activity">
    <reaction evidence="1">
        <text>hydrogenselenide + ATP + H2O = selenophosphate + AMP + phosphate + 2 H(+)</text>
        <dbReference type="Rhea" id="RHEA:18737"/>
        <dbReference type="ChEBI" id="CHEBI:15377"/>
        <dbReference type="ChEBI" id="CHEBI:15378"/>
        <dbReference type="ChEBI" id="CHEBI:16144"/>
        <dbReference type="ChEBI" id="CHEBI:29317"/>
        <dbReference type="ChEBI" id="CHEBI:30616"/>
        <dbReference type="ChEBI" id="CHEBI:43474"/>
        <dbReference type="ChEBI" id="CHEBI:456215"/>
        <dbReference type="EC" id="2.7.9.3"/>
    </reaction>
</comment>
<comment type="cofactor">
    <cofactor evidence="1">
        <name>Mg(2+)</name>
        <dbReference type="ChEBI" id="CHEBI:18420"/>
    </cofactor>
    <text evidence="1">Binds 1 Mg(2+) ion per monomer.</text>
</comment>
<comment type="subunit">
    <text evidence="1">Homodimer.</text>
</comment>
<comment type="similarity">
    <text evidence="1">Belongs to the selenophosphate synthase 1 family. Class I subfamily.</text>
</comment>
<protein>
    <recommendedName>
        <fullName evidence="1">Selenide, water dikinase</fullName>
        <ecNumber evidence="1">2.7.9.3</ecNumber>
    </recommendedName>
    <alternativeName>
        <fullName evidence="1">Selenium donor protein</fullName>
    </alternativeName>
    <alternativeName>
        <fullName evidence="1">Selenophosphate synthase</fullName>
    </alternativeName>
</protein>
<proteinExistence type="inferred from homology"/>
<accession>A6QBB7</accession>
<dbReference type="EC" id="2.7.9.3" evidence="1"/>
<dbReference type="EMBL" id="AP009179">
    <property type="protein sequence ID" value="BAF72776.1"/>
    <property type="molecule type" value="Genomic_DNA"/>
</dbReference>
<dbReference type="RefSeq" id="WP_012083589.1">
    <property type="nucleotide sequence ID" value="NC_009663.1"/>
</dbReference>
<dbReference type="SMR" id="A6QBB7"/>
<dbReference type="STRING" id="387093.SUN_1829"/>
<dbReference type="KEGG" id="sun:SUN_1829"/>
<dbReference type="eggNOG" id="COG0709">
    <property type="taxonomic scope" value="Bacteria"/>
</dbReference>
<dbReference type="HOGENOM" id="CLU_032859_0_1_7"/>
<dbReference type="OrthoDB" id="9767928at2"/>
<dbReference type="Proteomes" id="UP000006378">
    <property type="component" value="Chromosome"/>
</dbReference>
<dbReference type="GO" id="GO:0005737">
    <property type="term" value="C:cytoplasm"/>
    <property type="evidence" value="ECO:0007669"/>
    <property type="project" value="TreeGrafter"/>
</dbReference>
<dbReference type="GO" id="GO:0005524">
    <property type="term" value="F:ATP binding"/>
    <property type="evidence" value="ECO:0007669"/>
    <property type="project" value="UniProtKB-UniRule"/>
</dbReference>
<dbReference type="GO" id="GO:0000287">
    <property type="term" value="F:magnesium ion binding"/>
    <property type="evidence" value="ECO:0007669"/>
    <property type="project" value="UniProtKB-UniRule"/>
</dbReference>
<dbReference type="GO" id="GO:0004756">
    <property type="term" value="F:selenide, water dikinase activity"/>
    <property type="evidence" value="ECO:0007669"/>
    <property type="project" value="UniProtKB-UniRule"/>
</dbReference>
<dbReference type="GO" id="GO:0016260">
    <property type="term" value="P:selenocysteine biosynthetic process"/>
    <property type="evidence" value="ECO:0007669"/>
    <property type="project" value="InterPro"/>
</dbReference>
<dbReference type="CDD" id="cd02195">
    <property type="entry name" value="SelD"/>
    <property type="match status" value="1"/>
</dbReference>
<dbReference type="FunFam" id="3.30.1330.10:FF:000003">
    <property type="entry name" value="Selenide, water dikinase"/>
    <property type="match status" value="1"/>
</dbReference>
<dbReference type="FunFam" id="3.90.650.10:FF:000004">
    <property type="entry name" value="Selenide, water dikinase"/>
    <property type="match status" value="1"/>
</dbReference>
<dbReference type="Gene3D" id="3.90.650.10">
    <property type="entry name" value="PurM-like C-terminal domain"/>
    <property type="match status" value="1"/>
</dbReference>
<dbReference type="Gene3D" id="3.30.1330.10">
    <property type="entry name" value="PurM-like, N-terminal domain"/>
    <property type="match status" value="1"/>
</dbReference>
<dbReference type="HAMAP" id="MF_00625">
    <property type="entry name" value="SelD"/>
    <property type="match status" value="1"/>
</dbReference>
<dbReference type="InterPro" id="IPR010918">
    <property type="entry name" value="PurM-like_C_dom"/>
</dbReference>
<dbReference type="InterPro" id="IPR036676">
    <property type="entry name" value="PurM-like_C_sf"/>
</dbReference>
<dbReference type="InterPro" id="IPR016188">
    <property type="entry name" value="PurM-like_N"/>
</dbReference>
<dbReference type="InterPro" id="IPR036921">
    <property type="entry name" value="PurM-like_N_sf"/>
</dbReference>
<dbReference type="InterPro" id="IPR023061">
    <property type="entry name" value="SelD_I"/>
</dbReference>
<dbReference type="InterPro" id="IPR004536">
    <property type="entry name" value="SPS/SelD"/>
</dbReference>
<dbReference type="NCBIfam" id="NF002098">
    <property type="entry name" value="PRK00943.1"/>
    <property type="match status" value="1"/>
</dbReference>
<dbReference type="NCBIfam" id="TIGR00476">
    <property type="entry name" value="selD"/>
    <property type="match status" value="1"/>
</dbReference>
<dbReference type="PANTHER" id="PTHR10256:SF0">
    <property type="entry name" value="INACTIVE SELENIDE, WATER DIKINASE-LIKE PROTEIN-RELATED"/>
    <property type="match status" value="1"/>
</dbReference>
<dbReference type="PANTHER" id="PTHR10256">
    <property type="entry name" value="SELENIDE, WATER DIKINASE"/>
    <property type="match status" value="1"/>
</dbReference>
<dbReference type="Pfam" id="PF00586">
    <property type="entry name" value="AIRS"/>
    <property type="match status" value="1"/>
</dbReference>
<dbReference type="Pfam" id="PF02769">
    <property type="entry name" value="AIRS_C"/>
    <property type="match status" value="1"/>
</dbReference>
<dbReference type="PIRSF" id="PIRSF036407">
    <property type="entry name" value="Selenphspht_syn"/>
    <property type="match status" value="1"/>
</dbReference>
<dbReference type="SUPFAM" id="SSF56042">
    <property type="entry name" value="PurM C-terminal domain-like"/>
    <property type="match status" value="1"/>
</dbReference>
<dbReference type="SUPFAM" id="SSF55326">
    <property type="entry name" value="PurM N-terminal domain-like"/>
    <property type="match status" value="1"/>
</dbReference>
<keyword id="KW-0067">ATP-binding</keyword>
<keyword id="KW-0418">Kinase</keyword>
<keyword id="KW-0460">Magnesium</keyword>
<keyword id="KW-0479">Metal-binding</keyword>
<keyword id="KW-0547">Nucleotide-binding</keyword>
<keyword id="KW-0711">Selenium</keyword>
<keyword id="KW-0808">Transferase</keyword>
<reference key="1">
    <citation type="journal article" date="2007" name="Proc. Natl. Acad. Sci. U.S.A.">
        <title>Deep-sea vent epsilon-proteobacterial genomes provide insights into emergence of pathogens.</title>
        <authorList>
            <person name="Nakagawa S."/>
            <person name="Takaki Y."/>
            <person name="Shimamura S."/>
            <person name="Reysenbach A.-L."/>
            <person name="Takai K."/>
            <person name="Horikoshi K."/>
        </authorList>
    </citation>
    <scope>NUCLEOTIDE SEQUENCE [LARGE SCALE GENOMIC DNA]</scope>
    <source>
        <strain>NBC37-1</strain>
    </source>
</reference>
<organism>
    <name type="scientific">Sulfurovum sp. (strain NBC37-1)</name>
    <dbReference type="NCBI Taxonomy" id="387093"/>
    <lineage>
        <taxon>Bacteria</taxon>
        <taxon>Pseudomonadati</taxon>
        <taxon>Campylobacterota</taxon>
        <taxon>Epsilonproteobacteria</taxon>
        <taxon>Campylobacterales</taxon>
        <taxon>Sulfurovaceae</taxon>
        <taxon>Sulfurovum</taxon>
    </lineage>
</organism>
<sequence length="343" mass="36330">MSSVKLTEYSHGAGCGCKISPMLLDEILESTQKTSVYPQLLVGNANKDDAAAYDLGNGTSVLSTTDFFMPIVDDAFTFGQIAATNALSDIYAMGGKPLMAISIFGWPIDKLSADVAREVIDGGRSICEDAGIPLAGGHSIDSPEPIFGLAATGLVDNANLMQNDSAKKGCYIFLTKPLGIGILSTAQKQKKIEEGHIDPAIQAMTTLNKVGADLAPLESVVAMTDVTGFGLLGHLSEICEASDISAQVWFEKVPLLPNVEKYRQLGCIPGGARKNFASYGDKISEMTQQQREILCDAQTSGGLLVIVKKDGLEAFKKVTEAAGLTLEPIGETTVKSQHLVEVL</sequence>